<reference key="1">
    <citation type="submission" date="2008-03" db="EMBL/GenBank/DDBJ databases">
        <title>Complete sequence of Thermoproteus neutrophilus V24Sta.</title>
        <authorList>
            <consortium name="US DOE Joint Genome Institute"/>
            <person name="Copeland A."/>
            <person name="Lucas S."/>
            <person name="Lapidus A."/>
            <person name="Glavina del Rio T."/>
            <person name="Dalin E."/>
            <person name="Tice H."/>
            <person name="Bruce D."/>
            <person name="Goodwin L."/>
            <person name="Pitluck S."/>
            <person name="Sims D."/>
            <person name="Brettin T."/>
            <person name="Detter J.C."/>
            <person name="Han C."/>
            <person name="Kuske C.R."/>
            <person name="Schmutz J."/>
            <person name="Larimer F."/>
            <person name="Land M."/>
            <person name="Hauser L."/>
            <person name="Kyrpides N."/>
            <person name="Mikhailova N."/>
            <person name="Biddle J.F."/>
            <person name="Zhang Z."/>
            <person name="Fitz-Gibbon S.T."/>
            <person name="Lowe T.M."/>
            <person name="Saltikov C."/>
            <person name="House C.H."/>
            <person name="Richardson P."/>
        </authorList>
    </citation>
    <scope>NUCLEOTIDE SEQUENCE [LARGE SCALE GENOMIC DNA]</scope>
    <source>
        <strain>DSM 2338 / JCM 9278 / NBRC 100436 / V24Sta</strain>
    </source>
</reference>
<proteinExistence type="inferred from homology"/>
<keyword id="KW-0028">Amino-acid biosynthesis</keyword>
<keyword id="KW-0057">Aromatic amino acid biosynthesis</keyword>
<keyword id="KW-0210">Decarboxylase</keyword>
<keyword id="KW-0456">Lyase</keyword>
<keyword id="KW-0822">Tryptophan biosynthesis</keyword>
<feature type="chain" id="PRO_1000198793" description="Indole-3-glycerol phosphate synthase">
    <location>
        <begin position="1"/>
        <end position="249"/>
    </location>
</feature>
<name>TRPC_PYRNV</name>
<sequence length="249" mass="27871">MDFLVAVKKTVELRLSTEPSPPQRTAPLVDFTKAVGDFGIIAEYKRASPRGVVRLDLPPWAYFAELHSYASAFSVLTEPFWFLGDYRFIPIAKAFKPVLMKDFVIDRRQIEAAYGYGADAVLIIYRLVEREKAMELAEYAQRLGLTPLVEVDNAQDAREVATWGGRVVIGINARDLRTLETNLTRAFDIAKSLRGDVDYIIESGISRPEEVEKACLLYARGVLVGTSLMKNPALAKELKAAAERCLARR</sequence>
<gene>
    <name evidence="1" type="primary">trpC</name>
    <name type="ordered locus">Tneu_1892</name>
</gene>
<protein>
    <recommendedName>
        <fullName evidence="1">Indole-3-glycerol phosphate synthase</fullName>
        <shortName evidence="1">IGPS</shortName>
        <ecNumber evidence="1">4.1.1.48</ecNumber>
    </recommendedName>
</protein>
<evidence type="ECO:0000255" key="1">
    <source>
        <dbReference type="HAMAP-Rule" id="MF_00134"/>
    </source>
</evidence>
<dbReference type="EC" id="4.1.1.48" evidence="1"/>
<dbReference type="EMBL" id="CP001014">
    <property type="protein sequence ID" value="ACB40807.1"/>
    <property type="molecule type" value="Genomic_DNA"/>
</dbReference>
<dbReference type="RefSeq" id="WP_012351226.1">
    <property type="nucleotide sequence ID" value="NC_010525.1"/>
</dbReference>
<dbReference type="SMR" id="B1YBK5"/>
<dbReference type="STRING" id="444157.Tneu_1892"/>
<dbReference type="GeneID" id="6164950"/>
<dbReference type="KEGG" id="tne:Tneu_1892"/>
<dbReference type="eggNOG" id="arCOG01088">
    <property type="taxonomic scope" value="Archaea"/>
</dbReference>
<dbReference type="HOGENOM" id="CLU_034247_0_1_2"/>
<dbReference type="OrthoDB" id="15223at2157"/>
<dbReference type="UniPathway" id="UPA00035">
    <property type="reaction ID" value="UER00043"/>
</dbReference>
<dbReference type="Proteomes" id="UP000001694">
    <property type="component" value="Chromosome"/>
</dbReference>
<dbReference type="GO" id="GO:0004425">
    <property type="term" value="F:indole-3-glycerol-phosphate synthase activity"/>
    <property type="evidence" value="ECO:0007669"/>
    <property type="project" value="UniProtKB-UniRule"/>
</dbReference>
<dbReference type="GO" id="GO:0004640">
    <property type="term" value="F:phosphoribosylanthranilate isomerase activity"/>
    <property type="evidence" value="ECO:0007669"/>
    <property type="project" value="TreeGrafter"/>
</dbReference>
<dbReference type="GO" id="GO:0000162">
    <property type="term" value="P:L-tryptophan biosynthetic process"/>
    <property type="evidence" value="ECO:0007669"/>
    <property type="project" value="UniProtKB-UniRule"/>
</dbReference>
<dbReference type="CDD" id="cd00331">
    <property type="entry name" value="IGPS"/>
    <property type="match status" value="1"/>
</dbReference>
<dbReference type="Gene3D" id="3.20.20.70">
    <property type="entry name" value="Aldolase class I"/>
    <property type="match status" value="1"/>
</dbReference>
<dbReference type="HAMAP" id="MF_00134_A">
    <property type="entry name" value="IGPS_A"/>
    <property type="match status" value="1"/>
</dbReference>
<dbReference type="InterPro" id="IPR013785">
    <property type="entry name" value="Aldolase_TIM"/>
</dbReference>
<dbReference type="InterPro" id="IPR045186">
    <property type="entry name" value="Indole-3-glycerol_P_synth"/>
</dbReference>
<dbReference type="InterPro" id="IPR013798">
    <property type="entry name" value="Indole-3-glycerol_P_synth_dom"/>
</dbReference>
<dbReference type="InterPro" id="IPR001468">
    <property type="entry name" value="Indole-3-GlycerolPSynthase_CS"/>
</dbReference>
<dbReference type="InterPro" id="IPR011060">
    <property type="entry name" value="RibuloseP-bd_barrel"/>
</dbReference>
<dbReference type="PANTHER" id="PTHR22854:SF2">
    <property type="entry name" value="INDOLE-3-GLYCEROL-PHOSPHATE SYNTHASE"/>
    <property type="match status" value="1"/>
</dbReference>
<dbReference type="PANTHER" id="PTHR22854">
    <property type="entry name" value="TRYPTOPHAN BIOSYNTHESIS PROTEIN"/>
    <property type="match status" value="1"/>
</dbReference>
<dbReference type="Pfam" id="PF00218">
    <property type="entry name" value="IGPS"/>
    <property type="match status" value="1"/>
</dbReference>
<dbReference type="SUPFAM" id="SSF51366">
    <property type="entry name" value="Ribulose-phoshate binding barrel"/>
    <property type="match status" value="1"/>
</dbReference>
<dbReference type="PROSITE" id="PS00614">
    <property type="entry name" value="IGPS"/>
    <property type="match status" value="1"/>
</dbReference>
<organism>
    <name type="scientific">Pyrobaculum neutrophilum (strain DSM 2338 / JCM 9278 / NBRC 100436 / V24Sta)</name>
    <name type="common">Thermoproteus neutrophilus</name>
    <dbReference type="NCBI Taxonomy" id="444157"/>
    <lineage>
        <taxon>Archaea</taxon>
        <taxon>Thermoproteota</taxon>
        <taxon>Thermoprotei</taxon>
        <taxon>Thermoproteales</taxon>
        <taxon>Thermoproteaceae</taxon>
        <taxon>Pyrobaculum</taxon>
    </lineage>
</organism>
<comment type="catalytic activity">
    <reaction evidence="1">
        <text>1-(2-carboxyphenylamino)-1-deoxy-D-ribulose 5-phosphate + H(+) = (1S,2R)-1-C-(indol-3-yl)glycerol 3-phosphate + CO2 + H2O</text>
        <dbReference type="Rhea" id="RHEA:23476"/>
        <dbReference type="ChEBI" id="CHEBI:15377"/>
        <dbReference type="ChEBI" id="CHEBI:15378"/>
        <dbReference type="ChEBI" id="CHEBI:16526"/>
        <dbReference type="ChEBI" id="CHEBI:58613"/>
        <dbReference type="ChEBI" id="CHEBI:58866"/>
        <dbReference type="EC" id="4.1.1.48"/>
    </reaction>
</comment>
<comment type="pathway">
    <text evidence="1">Amino-acid biosynthesis; L-tryptophan biosynthesis; L-tryptophan from chorismate: step 4/5.</text>
</comment>
<comment type="similarity">
    <text evidence="1">Belongs to the TrpC family.</text>
</comment>
<accession>B1YBK5</accession>